<gene>
    <name evidence="2" type="primary">ddl</name>
    <name type="ordered locus">BAPKO_0203</name>
    <name type="ordered locus">BafPKo_0196</name>
</gene>
<feature type="chain" id="PRO_0000341062" description="D-alanine--D-alanine ligase">
    <location>
        <begin position="1"/>
        <end position="361"/>
    </location>
</feature>
<feature type="domain" description="ATP-grasp" evidence="2">
    <location>
        <begin position="134"/>
        <end position="344"/>
    </location>
</feature>
<feature type="binding site" evidence="2">
    <location>
        <begin position="167"/>
        <end position="222"/>
    </location>
    <ligand>
        <name>ATP</name>
        <dbReference type="ChEBI" id="CHEBI:30616"/>
    </ligand>
</feature>
<feature type="binding site" evidence="2">
    <location>
        <position position="297"/>
    </location>
    <ligand>
        <name>Mg(2+)</name>
        <dbReference type="ChEBI" id="CHEBI:18420"/>
        <label>1</label>
    </ligand>
</feature>
<feature type="binding site" evidence="2">
    <location>
        <position position="311"/>
    </location>
    <ligand>
        <name>Mg(2+)</name>
        <dbReference type="ChEBI" id="CHEBI:18420"/>
        <label>1</label>
    </ligand>
</feature>
<feature type="binding site" evidence="2">
    <location>
        <position position="311"/>
    </location>
    <ligand>
        <name>Mg(2+)</name>
        <dbReference type="ChEBI" id="CHEBI:18420"/>
        <label>2</label>
    </ligand>
</feature>
<feature type="binding site" evidence="2">
    <location>
        <position position="313"/>
    </location>
    <ligand>
        <name>Mg(2+)</name>
        <dbReference type="ChEBI" id="CHEBI:18420"/>
        <label>2</label>
    </ligand>
</feature>
<dbReference type="EC" id="6.3.2.4" evidence="2"/>
<dbReference type="EMBL" id="CP000395">
    <property type="protein sequence ID" value="ABH01465.1"/>
    <property type="molecule type" value="Genomic_DNA"/>
</dbReference>
<dbReference type="EMBL" id="CP002933">
    <property type="protein sequence ID" value="AEL69429.1"/>
    <property type="molecule type" value="Genomic_DNA"/>
</dbReference>
<dbReference type="RefSeq" id="WP_004790448.1">
    <property type="nucleotide sequence ID" value="NZ_CP160066.1"/>
</dbReference>
<dbReference type="SMR" id="Q0SNW3"/>
<dbReference type="STRING" id="29518.BLA32_03315"/>
<dbReference type="KEGG" id="baf:BAPKO_0203"/>
<dbReference type="KEGG" id="bafz:BafPKo_0196"/>
<dbReference type="PATRIC" id="fig|390236.22.peg.195"/>
<dbReference type="eggNOG" id="COG1181">
    <property type="taxonomic scope" value="Bacteria"/>
</dbReference>
<dbReference type="HOGENOM" id="CLU_039268_0_0_12"/>
<dbReference type="OrthoDB" id="9813261at2"/>
<dbReference type="UniPathway" id="UPA00219"/>
<dbReference type="Proteomes" id="UP000005216">
    <property type="component" value="Chromosome"/>
</dbReference>
<dbReference type="GO" id="GO:0005829">
    <property type="term" value="C:cytosol"/>
    <property type="evidence" value="ECO:0007669"/>
    <property type="project" value="TreeGrafter"/>
</dbReference>
<dbReference type="GO" id="GO:0005524">
    <property type="term" value="F:ATP binding"/>
    <property type="evidence" value="ECO:0007669"/>
    <property type="project" value="UniProtKB-KW"/>
</dbReference>
<dbReference type="GO" id="GO:0008716">
    <property type="term" value="F:D-alanine-D-alanine ligase activity"/>
    <property type="evidence" value="ECO:0007669"/>
    <property type="project" value="UniProtKB-UniRule"/>
</dbReference>
<dbReference type="GO" id="GO:0046872">
    <property type="term" value="F:metal ion binding"/>
    <property type="evidence" value="ECO:0007669"/>
    <property type="project" value="UniProtKB-KW"/>
</dbReference>
<dbReference type="GO" id="GO:0071555">
    <property type="term" value="P:cell wall organization"/>
    <property type="evidence" value="ECO:0007669"/>
    <property type="project" value="UniProtKB-KW"/>
</dbReference>
<dbReference type="GO" id="GO:0009252">
    <property type="term" value="P:peptidoglycan biosynthetic process"/>
    <property type="evidence" value="ECO:0007669"/>
    <property type="project" value="UniProtKB-UniRule"/>
</dbReference>
<dbReference type="GO" id="GO:0008360">
    <property type="term" value="P:regulation of cell shape"/>
    <property type="evidence" value="ECO:0007669"/>
    <property type="project" value="UniProtKB-KW"/>
</dbReference>
<dbReference type="Gene3D" id="3.40.50.20">
    <property type="match status" value="1"/>
</dbReference>
<dbReference type="Gene3D" id="3.30.1490.20">
    <property type="entry name" value="ATP-grasp fold, A domain"/>
    <property type="match status" value="1"/>
</dbReference>
<dbReference type="Gene3D" id="3.30.470.20">
    <property type="entry name" value="ATP-grasp fold, B domain"/>
    <property type="match status" value="1"/>
</dbReference>
<dbReference type="HAMAP" id="MF_00047">
    <property type="entry name" value="Dala_Dala_lig"/>
    <property type="match status" value="1"/>
</dbReference>
<dbReference type="InterPro" id="IPR011761">
    <property type="entry name" value="ATP-grasp"/>
</dbReference>
<dbReference type="InterPro" id="IPR013815">
    <property type="entry name" value="ATP_grasp_subdomain_1"/>
</dbReference>
<dbReference type="InterPro" id="IPR000291">
    <property type="entry name" value="D-Ala_lig_Van_CS"/>
</dbReference>
<dbReference type="InterPro" id="IPR005905">
    <property type="entry name" value="D_ala_D_ala"/>
</dbReference>
<dbReference type="InterPro" id="IPR011095">
    <property type="entry name" value="Dala_Dala_lig_C"/>
</dbReference>
<dbReference type="InterPro" id="IPR011127">
    <property type="entry name" value="Dala_Dala_lig_N"/>
</dbReference>
<dbReference type="InterPro" id="IPR016185">
    <property type="entry name" value="PreATP-grasp_dom_sf"/>
</dbReference>
<dbReference type="NCBIfam" id="TIGR01205">
    <property type="entry name" value="D_ala_D_alaTIGR"/>
    <property type="match status" value="1"/>
</dbReference>
<dbReference type="NCBIfam" id="NF002528">
    <property type="entry name" value="PRK01966.1-4"/>
    <property type="match status" value="1"/>
</dbReference>
<dbReference type="NCBIfam" id="NF011168">
    <property type="entry name" value="PRK14570.1"/>
    <property type="match status" value="1"/>
</dbReference>
<dbReference type="PANTHER" id="PTHR23132">
    <property type="entry name" value="D-ALANINE--D-ALANINE LIGASE"/>
    <property type="match status" value="1"/>
</dbReference>
<dbReference type="PANTHER" id="PTHR23132:SF25">
    <property type="entry name" value="D-ALANINE--D-ALANINE LIGASE A"/>
    <property type="match status" value="1"/>
</dbReference>
<dbReference type="Pfam" id="PF07478">
    <property type="entry name" value="Dala_Dala_lig_C"/>
    <property type="match status" value="1"/>
</dbReference>
<dbReference type="Pfam" id="PF01820">
    <property type="entry name" value="Dala_Dala_lig_N"/>
    <property type="match status" value="1"/>
</dbReference>
<dbReference type="PIRSF" id="PIRSF039102">
    <property type="entry name" value="Ddl/VanB"/>
    <property type="match status" value="1"/>
</dbReference>
<dbReference type="SUPFAM" id="SSF56059">
    <property type="entry name" value="Glutathione synthetase ATP-binding domain-like"/>
    <property type="match status" value="1"/>
</dbReference>
<dbReference type="SUPFAM" id="SSF52440">
    <property type="entry name" value="PreATP-grasp domain"/>
    <property type="match status" value="1"/>
</dbReference>
<dbReference type="PROSITE" id="PS50975">
    <property type="entry name" value="ATP_GRASP"/>
    <property type="match status" value="1"/>
</dbReference>
<dbReference type="PROSITE" id="PS00843">
    <property type="entry name" value="DALA_DALA_LIGASE_1"/>
    <property type="match status" value="1"/>
</dbReference>
<dbReference type="PROSITE" id="PS00844">
    <property type="entry name" value="DALA_DALA_LIGASE_2"/>
    <property type="match status" value="1"/>
</dbReference>
<comment type="function">
    <text evidence="2">Cell wall formation.</text>
</comment>
<comment type="catalytic activity">
    <reaction evidence="2">
        <text>2 D-alanine + ATP = D-alanyl-D-alanine + ADP + phosphate + H(+)</text>
        <dbReference type="Rhea" id="RHEA:11224"/>
        <dbReference type="ChEBI" id="CHEBI:15378"/>
        <dbReference type="ChEBI" id="CHEBI:30616"/>
        <dbReference type="ChEBI" id="CHEBI:43474"/>
        <dbReference type="ChEBI" id="CHEBI:57416"/>
        <dbReference type="ChEBI" id="CHEBI:57822"/>
        <dbReference type="ChEBI" id="CHEBI:456216"/>
        <dbReference type="EC" id="6.3.2.4"/>
    </reaction>
</comment>
<comment type="cofactor">
    <cofactor evidence="1">
        <name>Mg(2+)</name>
        <dbReference type="ChEBI" id="CHEBI:18420"/>
    </cofactor>
    <cofactor evidence="1">
        <name>Mn(2+)</name>
        <dbReference type="ChEBI" id="CHEBI:29035"/>
    </cofactor>
    <text evidence="1">Binds 2 magnesium or manganese ions per subunit.</text>
</comment>
<comment type="pathway">
    <text evidence="2">Cell wall biogenesis; peptidoglycan biosynthesis.</text>
</comment>
<comment type="subcellular location">
    <subcellularLocation>
        <location evidence="2">Cytoplasm</location>
    </subcellularLocation>
</comment>
<comment type="similarity">
    <text evidence="2">Belongs to the D-alanine--D-alanine ligase family.</text>
</comment>
<proteinExistence type="inferred from homology"/>
<organism>
    <name type="scientific">Borreliella afzelii (strain PKo)</name>
    <name type="common">Borrelia afzelii</name>
    <dbReference type="NCBI Taxonomy" id="390236"/>
    <lineage>
        <taxon>Bacteria</taxon>
        <taxon>Pseudomonadati</taxon>
        <taxon>Spirochaetota</taxon>
        <taxon>Spirochaetia</taxon>
        <taxon>Spirochaetales</taxon>
        <taxon>Borreliaceae</taxon>
        <taxon>Borreliella</taxon>
    </lineage>
</organism>
<evidence type="ECO:0000250" key="1"/>
<evidence type="ECO:0000255" key="2">
    <source>
        <dbReference type="HAMAP-Rule" id="MF_00047"/>
    </source>
</evidence>
<protein>
    <recommendedName>
        <fullName evidence="2">D-alanine--D-alanine ligase</fullName>
        <ecNumber evidence="2">6.3.2.4</ecNumber>
    </recommendedName>
    <alternativeName>
        <fullName evidence="2">D-Ala-D-Ala ligase</fullName>
    </alternativeName>
    <alternativeName>
        <fullName evidence="2">D-alanylalanine synthetase</fullName>
    </alternativeName>
</protein>
<sequence length="361" mass="40772">MKKNLMLIFGGVSFEHEISCKSAYSVYLALLDLNKYNIYSAYIDKCTGIWYLLDSVSDPPKPIDTDVLPIVSLLPGFGIFSNNKNLEIDVVFPVVHGRTGEDGAIQGVLKVMDIPCVGAGIIGSAISSNKYFCKLLLKSFNIPIVPFIGFRQYDYSLDKEEIKRNVKEVLGYPVIVKPAVLGSSIGINVAYSENQIESCIEEALKYDLTIVIEKFIEAREIECSIIGNEKMKIFSPGEVVVQDFIFYDYDAKYSVIPGNSIIFNIPAHLETNQLLSIKEYAFLVYKNLELRGMARVDFFVEKKSGTIYLNEINTIPGFTDISMFSKMCSHDGLQFKDLIDNLIDYAFQSYINRKKRINFKD</sequence>
<name>DDL_BORAP</name>
<keyword id="KW-0067">ATP-binding</keyword>
<keyword id="KW-0133">Cell shape</keyword>
<keyword id="KW-0961">Cell wall biogenesis/degradation</keyword>
<keyword id="KW-0963">Cytoplasm</keyword>
<keyword id="KW-0436">Ligase</keyword>
<keyword id="KW-0460">Magnesium</keyword>
<keyword id="KW-0464">Manganese</keyword>
<keyword id="KW-0479">Metal-binding</keyword>
<keyword id="KW-0547">Nucleotide-binding</keyword>
<keyword id="KW-0573">Peptidoglycan synthesis</keyword>
<accession>Q0SNW3</accession>
<accession>G0IR43</accession>
<reference key="1">
    <citation type="journal article" date="2006" name="BMC Genomics">
        <title>Comparative genome analysis: selection pressure on the Borrelia vls cassettes is essential for infectivity.</title>
        <authorList>
            <person name="Gloeckner G."/>
            <person name="Schulte-Spechtel U."/>
            <person name="Schilhabel M."/>
            <person name="Felder M."/>
            <person name="Suehnel J."/>
            <person name="Wilske B."/>
            <person name="Platzer M."/>
        </authorList>
    </citation>
    <scope>NUCLEOTIDE SEQUENCE [LARGE SCALE GENOMIC DNA]</scope>
    <source>
        <strain>PKo</strain>
    </source>
</reference>
<reference key="2">
    <citation type="journal article" date="2011" name="J. Bacteriol.">
        <title>Whole-genome sequences of two Borrelia afzelii and two Borrelia garinii Lyme disease agent isolates.</title>
        <authorList>
            <person name="Casjens S.R."/>
            <person name="Mongodin E.F."/>
            <person name="Qiu W.G."/>
            <person name="Dunn J.J."/>
            <person name="Luft B.J."/>
            <person name="Fraser-Liggett C.M."/>
            <person name="Schutzer S.E."/>
        </authorList>
    </citation>
    <scope>NUCLEOTIDE SEQUENCE [LARGE SCALE GENOMIC DNA]</scope>
    <source>
        <strain>PKo</strain>
    </source>
</reference>